<sequence>AVWKDFLKNIGKAAGKAVLNSVTDMVNE</sequence>
<name>DRS1_AGASP</name>
<organism>
    <name type="scientific">Agalychnis spurrelli</name>
    <name type="common">Gliding leaf frog</name>
    <name type="synonym">Agalychnis litodryas</name>
    <dbReference type="NCBI Taxonomy" id="317303"/>
    <lineage>
        <taxon>Eukaryota</taxon>
        <taxon>Metazoa</taxon>
        <taxon>Chordata</taxon>
        <taxon>Craniata</taxon>
        <taxon>Vertebrata</taxon>
        <taxon>Euteleostomi</taxon>
        <taxon>Amphibia</taxon>
        <taxon>Batrachia</taxon>
        <taxon>Anura</taxon>
        <taxon>Neobatrachia</taxon>
        <taxon>Hyloidea</taxon>
        <taxon>Hylidae</taxon>
        <taxon>Phyllomedusinae</taxon>
        <taxon>Agalychnis</taxon>
    </lineage>
</organism>
<comment type="function">
    <text evidence="2 6">Probable antimicrobial peptide which stimulates insulin-release in glucose-responsive BRIN-BD 11 cells.</text>
</comment>
<comment type="subcellular location">
    <subcellularLocation>
        <location evidence="2">Secreted</location>
    </subcellularLocation>
</comment>
<comment type="tissue specificity">
    <text evidence="2">Expressed by the skin glands.</text>
</comment>
<comment type="mass spectrometry"/>
<comment type="similarity">
    <text evidence="1">Belongs to the frog skin active peptide (FSAP) family. Dermaseptin subfamily.</text>
</comment>
<comment type="online information" name="The antimicrobial peptide database">
    <link uri="https://wangapd3.com/database/query_output.php?ID=0960"/>
</comment>
<keyword id="KW-0878">Amphibian defense peptide</keyword>
<keyword id="KW-0929">Antimicrobial</keyword>
<keyword id="KW-0903">Direct protein sequencing</keyword>
<keyword id="KW-0391">Immunity</keyword>
<keyword id="KW-0399">Innate immunity</keyword>
<keyword id="KW-0964">Secreted</keyword>
<dbReference type="SMR" id="P86941"/>
<dbReference type="GO" id="GO:0005576">
    <property type="term" value="C:extracellular region"/>
    <property type="evidence" value="ECO:0007669"/>
    <property type="project" value="UniProtKB-SubCell"/>
</dbReference>
<dbReference type="GO" id="GO:0045087">
    <property type="term" value="P:innate immune response"/>
    <property type="evidence" value="ECO:0007669"/>
    <property type="project" value="UniProtKB-KW"/>
</dbReference>
<dbReference type="InterPro" id="IPR022731">
    <property type="entry name" value="Dermaseptin_dom"/>
</dbReference>
<dbReference type="Pfam" id="PF12121">
    <property type="entry name" value="DD_K"/>
    <property type="match status" value="1"/>
</dbReference>
<proteinExistence type="evidence at protein level"/>
<evidence type="ECO:0000255" key="1"/>
<evidence type="ECO:0000269" key="2">
    <source>
    </source>
</evidence>
<evidence type="ECO:0000303" key="3">
    <source>
    </source>
</evidence>
<evidence type="ECO:0000303" key="4">
    <source>
    </source>
</evidence>
<evidence type="ECO:0000303" key="5">
    <source>
    </source>
</evidence>
<evidence type="ECO:0000305" key="6"/>
<feature type="peptide" id="PRO_0000412976" description="Dermaseptin-SP1" evidence="2">
    <location>
        <begin position="1"/>
        <end position="28"/>
    </location>
</feature>
<protein>
    <recommendedName>
        <fullName evidence="5">Dermaseptin-SP1</fullName>
        <shortName evidence="5">DRS-SP1</shortName>
    </recommendedName>
    <alternativeName>
        <fullName evidence="4">Dermaseptin-LI1</fullName>
        <shortName evidence="4">DRS-LI1</shortName>
    </alternativeName>
    <alternativeName>
        <fullName evidence="3">Insulinotropic peptide 1</fullName>
        <shortName evidence="3">FSIP</shortName>
    </alternativeName>
</protein>
<accession>P86941</accession>
<reference key="1">
    <citation type="journal article" date="2004" name="Regul. Pept.">
        <title>Isolation and characterisation of an unexpected class of insulinotropic peptides in the skin of the frog Agalychnis litodryas.</title>
        <authorList>
            <person name="Marenah L."/>
            <person name="Shaw C."/>
            <person name="Orr D.F."/>
            <person name="McClean S."/>
            <person name="Flatt P.R."/>
            <person name="Abdel-Wahab Y.H."/>
        </authorList>
    </citation>
    <scope>PROTEIN SEQUENCE</scope>
    <scope>FUNCTION</scope>
    <scope>SUBCELLULAR LOCATION</scope>
    <scope>TISSUE SPECIFICITY</scope>
    <scope>MASS SPECTROMETRY</scope>
    <source>
        <tissue>Skin secretion</tissue>
    </source>
</reference>
<reference key="2">
    <citation type="journal article" date="2008" name="Peptides">
        <title>A consistent nomenclature of antimicrobial peptides isolated from frogs of the subfamily Phyllomedusinae.</title>
        <authorList>
            <person name="Amiche M."/>
            <person name="Ladram A."/>
            <person name="Nicolas P."/>
        </authorList>
    </citation>
    <scope>NOMENCLATURE</scope>
</reference>
<reference key="3">
    <citation type="journal article" date="2019" name="Biomolecules">
        <title>Unravelling the skin secretion peptides of the gliding leaf frog, Agalychnis spurrelli (Hylidae).</title>
        <authorList>
            <person name="Proano-Bolanos C."/>
            <person name="Blasco-Zuniga A."/>
            <person name="Almeida J.R."/>
            <person name="Wang L."/>
            <person name="Llumiquinga M.A."/>
            <person name="Rivera M."/>
            <person name="Zhou M."/>
            <person name="Chen T."/>
            <person name="Shaw C."/>
        </authorList>
    </citation>
    <scope>NOMENCLATURE</scope>
</reference>